<organism>
    <name type="scientific">Chelativorans sp. (strain BNC1)</name>
    <dbReference type="NCBI Taxonomy" id="266779"/>
    <lineage>
        <taxon>Bacteria</taxon>
        <taxon>Pseudomonadati</taxon>
        <taxon>Pseudomonadota</taxon>
        <taxon>Alphaproteobacteria</taxon>
        <taxon>Hyphomicrobiales</taxon>
        <taxon>Phyllobacteriaceae</taxon>
        <taxon>Chelativorans</taxon>
    </lineage>
</organism>
<reference key="1">
    <citation type="submission" date="2006-06" db="EMBL/GenBank/DDBJ databases">
        <title>Complete sequence of chromosome of Mesorhizobium sp. BNC1.</title>
        <authorList>
            <consortium name="US DOE Joint Genome Institute"/>
            <person name="Copeland A."/>
            <person name="Lucas S."/>
            <person name="Lapidus A."/>
            <person name="Barry K."/>
            <person name="Detter J.C."/>
            <person name="Glavina del Rio T."/>
            <person name="Hammon N."/>
            <person name="Israni S."/>
            <person name="Dalin E."/>
            <person name="Tice H."/>
            <person name="Pitluck S."/>
            <person name="Chertkov O."/>
            <person name="Brettin T."/>
            <person name="Bruce D."/>
            <person name="Han C."/>
            <person name="Tapia R."/>
            <person name="Gilna P."/>
            <person name="Schmutz J."/>
            <person name="Larimer F."/>
            <person name="Land M."/>
            <person name="Hauser L."/>
            <person name="Kyrpides N."/>
            <person name="Mikhailova N."/>
            <person name="Richardson P."/>
        </authorList>
    </citation>
    <scope>NUCLEOTIDE SEQUENCE [LARGE SCALE GENOMIC DNA]</scope>
    <source>
        <strain>BNC1</strain>
    </source>
</reference>
<gene>
    <name evidence="1" type="primary">rpmJ</name>
    <name type="ordered locus">Meso_3258</name>
</gene>
<proteinExistence type="inferred from homology"/>
<sequence>MKIRNSLKALKGRHRENRMVRRKGRIYIINKSNPRYKARQG</sequence>
<name>RL36_CHESB</name>
<protein>
    <recommendedName>
        <fullName evidence="1">Large ribosomal subunit protein bL36</fullName>
    </recommendedName>
    <alternativeName>
        <fullName evidence="2">50S ribosomal protein L36</fullName>
    </alternativeName>
</protein>
<comment type="similarity">
    <text evidence="1">Belongs to the bacterial ribosomal protein bL36 family.</text>
</comment>
<feature type="chain" id="PRO_0000302238" description="Large ribosomal subunit protein bL36">
    <location>
        <begin position="1"/>
        <end position="41"/>
    </location>
</feature>
<accession>Q11D95</accession>
<evidence type="ECO:0000255" key="1">
    <source>
        <dbReference type="HAMAP-Rule" id="MF_00251"/>
    </source>
</evidence>
<evidence type="ECO:0000305" key="2"/>
<keyword id="KW-0687">Ribonucleoprotein</keyword>
<keyword id="KW-0689">Ribosomal protein</keyword>
<dbReference type="EMBL" id="CP000390">
    <property type="protein sequence ID" value="ABG64630.1"/>
    <property type="molecule type" value="Genomic_DNA"/>
</dbReference>
<dbReference type="SMR" id="Q11D95"/>
<dbReference type="STRING" id="266779.Meso_3258"/>
<dbReference type="KEGG" id="mes:Meso_3258"/>
<dbReference type="eggNOG" id="COG0257">
    <property type="taxonomic scope" value="Bacteria"/>
</dbReference>
<dbReference type="HOGENOM" id="CLU_135723_3_2_5"/>
<dbReference type="OrthoDB" id="9801558at2"/>
<dbReference type="GO" id="GO:1990904">
    <property type="term" value="C:ribonucleoprotein complex"/>
    <property type="evidence" value="ECO:0007669"/>
    <property type="project" value="UniProtKB-KW"/>
</dbReference>
<dbReference type="GO" id="GO:0005840">
    <property type="term" value="C:ribosome"/>
    <property type="evidence" value="ECO:0007669"/>
    <property type="project" value="UniProtKB-KW"/>
</dbReference>
<dbReference type="GO" id="GO:0003735">
    <property type="term" value="F:structural constituent of ribosome"/>
    <property type="evidence" value="ECO:0007669"/>
    <property type="project" value="InterPro"/>
</dbReference>
<dbReference type="GO" id="GO:0006412">
    <property type="term" value="P:translation"/>
    <property type="evidence" value="ECO:0007669"/>
    <property type="project" value="UniProtKB-UniRule"/>
</dbReference>
<dbReference type="HAMAP" id="MF_00251">
    <property type="entry name" value="Ribosomal_bL36"/>
    <property type="match status" value="1"/>
</dbReference>
<dbReference type="InterPro" id="IPR000473">
    <property type="entry name" value="Ribosomal_bL36"/>
</dbReference>
<dbReference type="InterPro" id="IPR035977">
    <property type="entry name" value="Ribosomal_bL36_sp"/>
</dbReference>
<dbReference type="InterPro" id="IPR047621">
    <property type="entry name" value="Ribosomal_L36_bact"/>
</dbReference>
<dbReference type="NCBIfam" id="NF002021">
    <property type="entry name" value="PRK00831.1"/>
    <property type="match status" value="1"/>
</dbReference>
<dbReference type="NCBIfam" id="TIGR01022">
    <property type="entry name" value="rpmJ_bact"/>
    <property type="match status" value="1"/>
</dbReference>
<dbReference type="PANTHER" id="PTHR47781">
    <property type="entry name" value="50S RIBOSOMAL PROTEIN L36 2"/>
    <property type="match status" value="1"/>
</dbReference>
<dbReference type="PANTHER" id="PTHR47781:SF1">
    <property type="entry name" value="LARGE RIBOSOMAL SUBUNIT PROTEIN BL36B"/>
    <property type="match status" value="1"/>
</dbReference>
<dbReference type="Pfam" id="PF00444">
    <property type="entry name" value="Ribosomal_L36"/>
    <property type="match status" value="1"/>
</dbReference>
<dbReference type="SUPFAM" id="SSF57840">
    <property type="entry name" value="Ribosomal protein L36"/>
    <property type="match status" value="1"/>
</dbReference>